<proteinExistence type="inferred from homology"/>
<evidence type="ECO:0000250" key="1"/>
<evidence type="ECO:0000255" key="2"/>
<evidence type="ECO:0000305" key="3"/>
<name>NU6M_ONCMY</name>
<accession>P48177</accession>
<comment type="function">
    <text evidence="1">Core subunit of the mitochondrial membrane respiratory chain NADH dehydrogenase (Complex I) that is believed to belong to the minimal assembly required for catalysis. Complex I functions in the transfer of electrons from NADH to the respiratory chain. The immediate electron acceptor for the enzyme is believed to be ubiquinone (By similarity).</text>
</comment>
<comment type="catalytic activity">
    <reaction>
        <text>a ubiquinone + NADH + 5 H(+)(in) = a ubiquinol + NAD(+) + 4 H(+)(out)</text>
        <dbReference type="Rhea" id="RHEA:29091"/>
        <dbReference type="Rhea" id="RHEA-COMP:9565"/>
        <dbReference type="Rhea" id="RHEA-COMP:9566"/>
        <dbReference type="ChEBI" id="CHEBI:15378"/>
        <dbReference type="ChEBI" id="CHEBI:16389"/>
        <dbReference type="ChEBI" id="CHEBI:17976"/>
        <dbReference type="ChEBI" id="CHEBI:57540"/>
        <dbReference type="ChEBI" id="CHEBI:57945"/>
        <dbReference type="EC" id="7.1.1.2"/>
    </reaction>
</comment>
<comment type="subcellular location">
    <subcellularLocation>
        <location evidence="3">Mitochondrion membrane</location>
        <topology evidence="3">Multi-pass membrane protein</topology>
    </subcellularLocation>
</comment>
<comment type="similarity">
    <text evidence="3">Belongs to the complex I subunit 6 family.</text>
</comment>
<reference key="1">
    <citation type="journal article" date="1995" name="J. Mol. Evol.">
        <title>The complete nucleotide sequence of the mitochondrial DNA genome of the rainbow trout, Oncorhynchus mykiss.</title>
        <authorList>
            <person name="Zardoya R."/>
            <person name="Garrido-Pertierra A."/>
            <person name="Bautista J.M."/>
        </authorList>
    </citation>
    <scope>NUCLEOTIDE SEQUENCE [GENOMIC DNA]</scope>
    <source>
        <tissue>Liver</tissue>
    </source>
</reference>
<feature type="chain" id="PRO_0000118307" description="NADH-ubiquinone oxidoreductase chain 6">
    <location>
        <begin position="1"/>
        <end position="173"/>
    </location>
</feature>
<feature type="transmembrane region" description="Helical" evidence="2">
    <location>
        <begin position="1"/>
        <end position="21"/>
    </location>
</feature>
<feature type="transmembrane region" description="Helical" evidence="2">
    <location>
        <begin position="24"/>
        <end position="44"/>
    </location>
</feature>
<feature type="transmembrane region" description="Helical" evidence="2">
    <location>
        <begin position="53"/>
        <end position="73"/>
    </location>
</feature>
<feature type="transmembrane region" description="Helical" evidence="2">
    <location>
        <begin position="87"/>
        <end position="107"/>
    </location>
</feature>
<feature type="transmembrane region" description="Helical" evidence="2">
    <location>
        <begin position="141"/>
        <end position="161"/>
    </location>
</feature>
<geneLocation type="mitochondrion"/>
<sequence>MTYLVSLFLLGLVLGLVAVASNPAPYFAALGLVVAAGVGCGVLVGHGGSFLSLVLFLIYLGGMLVVFAYSAALAAEPFPESWGDRSVLGYVVVYTVGVVLVAGLFWGGWYETSWVAVDEFKEFSVLRGDTSGVALMYSHGGGMLIACAWVLLLTLFVVLELTRGLSRGALRAV</sequence>
<gene>
    <name type="primary">MT-ND6</name>
    <name type="synonym">MTND6</name>
    <name type="synonym">NADH6</name>
    <name type="synonym">ND6</name>
</gene>
<dbReference type="EC" id="7.1.1.2"/>
<dbReference type="EMBL" id="L29771">
    <property type="protein sequence ID" value="AAB03358.1"/>
    <property type="molecule type" value="Genomic_DNA"/>
</dbReference>
<dbReference type="PIR" id="T09868">
    <property type="entry name" value="T09868"/>
</dbReference>
<dbReference type="RefSeq" id="NP_008301.1">
    <property type="nucleotide sequence ID" value="NC_001717.1"/>
</dbReference>
<dbReference type="SMR" id="P48177"/>
<dbReference type="GeneID" id="807970"/>
<dbReference type="KEGG" id="omy:807970"/>
<dbReference type="CTD" id="4541"/>
<dbReference type="OrthoDB" id="9837654at2759"/>
<dbReference type="Proteomes" id="UP000694395">
    <property type="component" value="Unplaced"/>
</dbReference>
<dbReference type="GO" id="GO:0031966">
    <property type="term" value="C:mitochondrial membrane"/>
    <property type="evidence" value="ECO:0007669"/>
    <property type="project" value="UniProtKB-SubCell"/>
</dbReference>
<dbReference type="GO" id="GO:0008137">
    <property type="term" value="F:NADH dehydrogenase (ubiquinone) activity"/>
    <property type="evidence" value="ECO:0007669"/>
    <property type="project" value="UniProtKB-EC"/>
</dbReference>
<dbReference type="Gene3D" id="1.20.120.1200">
    <property type="entry name" value="NADH-ubiquinone/plastoquinone oxidoreductase chain 6, subunit NuoJ"/>
    <property type="match status" value="1"/>
</dbReference>
<dbReference type="InterPro" id="IPR050269">
    <property type="entry name" value="ComplexI_Subunit6"/>
</dbReference>
<dbReference type="InterPro" id="IPR001457">
    <property type="entry name" value="NADH_UbQ/plastoQ_OxRdtase_su6"/>
</dbReference>
<dbReference type="InterPro" id="IPR042106">
    <property type="entry name" value="Nuo/plastoQ_OxRdtase_6_NuoJ"/>
</dbReference>
<dbReference type="PANTHER" id="PTHR11435">
    <property type="entry name" value="NADH UBIQUINONE OXIDOREDUCTASE SUBUNIT ND6"/>
    <property type="match status" value="1"/>
</dbReference>
<dbReference type="PANTHER" id="PTHR11435:SF1">
    <property type="entry name" value="NADH-UBIQUINONE OXIDOREDUCTASE CHAIN 6"/>
    <property type="match status" value="1"/>
</dbReference>
<dbReference type="Pfam" id="PF00499">
    <property type="entry name" value="Oxidored_q3"/>
    <property type="match status" value="1"/>
</dbReference>
<organism>
    <name type="scientific">Oncorhynchus mykiss</name>
    <name type="common">Rainbow trout</name>
    <name type="synonym">Salmo gairdneri</name>
    <dbReference type="NCBI Taxonomy" id="8022"/>
    <lineage>
        <taxon>Eukaryota</taxon>
        <taxon>Metazoa</taxon>
        <taxon>Chordata</taxon>
        <taxon>Craniata</taxon>
        <taxon>Vertebrata</taxon>
        <taxon>Euteleostomi</taxon>
        <taxon>Actinopterygii</taxon>
        <taxon>Neopterygii</taxon>
        <taxon>Teleostei</taxon>
        <taxon>Protacanthopterygii</taxon>
        <taxon>Salmoniformes</taxon>
        <taxon>Salmonidae</taxon>
        <taxon>Salmoninae</taxon>
        <taxon>Oncorhynchus</taxon>
    </lineage>
</organism>
<protein>
    <recommendedName>
        <fullName>NADH-ubiquinone oxidoreductase chain 6</fullName>
        <ecNumber>7.1.1.2</ecNumber>
    </recommendedName>
    <alternativeName>
        <fullName>NADH dehydrogenase subunit 6</fullName>
    </alternativeName>
</protein>
<keyword id="KW-0249">Electron transport</keyword>
<keyword id="KW-0472">Membrane</keyword>
<keyword id="KW-0496">Mitochondrion</keyword>
<keyword id="KW-0520">NAD</keyword>
<keyword id="KW-0679">Respiratory chain</keyword>
<keyword id="KW-1278">Translocase</keyword>
<keyword id="KW-0812">Transmembrane</keyword>
<keyword id="KW-1133">Transmembrane helix</keyword>
<keyword id="KW-0813">Transport</keyword>
<keyword id="KW-0830">Ubiquinone</keyword>